<keyword id="KW-0045">Antibiotic biosynthesis</keyword>
<keyword id="KW-0143">Chaperone</keyword>
<keyword id="KW-0963">Cytoplasm</keyword>
<keyword id="KW-0274">FAD</keyword>
<keyword id="KW-0285">Flavoprotein</keyword>
<keyword id="KW-1185">Reference proteome</keyword>
<organism>
    <name type="scientific">Serratia sp. (strain ATCC 39006)</name>
    <name type="common">Prodigiosinella confusarubida</name>
    <dbReference type="NCBI Taxonomy" id="104623"/>
    <lineage>
        <taxon>Bacteria</taxon>
        <taxon>Pseudomonadati</taxon>
        <taxon>Pseudomonadota</taxon>
        <taxon>Gammaproteobacteria</taxon>
        <taxon>Enterobacterales</taxon>
        <taxon>Pectobacteriaceae</taxon>
        <taxon>Prodigiosinella</taxon>
    </lineage>
</organism>
<feature type="chain" id="PRO_0000438885" description="FAD assembly factor SdhE">
    <location>
        <begin position="1"/>
        <end position="88"/>
    </location>
</feature>
<feature type="mutagenesis site" description="Partially restores aerobic growth of deletion on succinate, less growth in LB, slightly decreased SDH activity, protein expressed at low levels. Wild-type flavinylation of SdhA in vivo, protein still interacts with SdhA. Does not restore anaerobic growth in E.coli to an sdhE deletion, FrdA from Serratia is flavinated to near wild-type levels." evidence="4 5">
    <original>R</original>
    <variation>A</variation>
    <location>
        <position position="15"/>
    </location>
</feature>
<feature type="mutagenesis site" description="No change from wild-type." evidence="4 5">
    <original>G</original>
    <variation>A</variation>
    <location>
        <position position="16"/>
    </location>
</feature>
<feature type="mutagenesis site" description="Binds decreased amounts of FAD. Does not restore aerobic growth of deletion on succinate, less growth in LB, does not restore SDH activity. No flavinylation of SdhA in vivo; protein has wild-type secondary structure and still interacts with SdhA. Impairs growth and SDH activity on succinate in the presence of wild-type SdhE. Does not restore anaerobic growth in E.coli to an sdhE deletion, does not flavinate FrdA from Serratia but still interacts with FrdA." evidence="2 4 5">
    <original>G</original>
    <variation>R</variation>
    <location>
        <position position="16"/>
    </location>
</feature>
<feature type="mutagenesis site" description="Does not restore aerobic growth of deletion on succinate, less growth in LB, does not restore SDH activity. Greatly reduced flavinylation of SdhA in vivo; protein has wild-type secondary structure and still interacts with SdhA. Greatly impairs growth and SDH activity on succinate in the presence of wild-type SdhE. Fully restores anaerobic growth in E.coli to an sdhE deletion, FrdA from Serratia is flavinated to near wild-type levels." evidence="4 5">
    <original>E</original>
    <variation>A</variation>
    <location>
        <position position="19"/>
    </location>
</feature>
<feature type="mutagenesis site" description="Restores aerobic growth of deletion on succinate, does not impair growth on succinate in the presence of wild-type SdhE." evidence="4">
    <original>E</original>
    <variation>D</variation>
    <location>
        <position position="19"/>
    </location>
</feature>
<feature type="mutagenesis site" description="No change from wild-type." evidence="4 5">
    <original>D</original>
    <variation>A</variation>
    <location>
        <position position="21"/>
    </location>
</feature>
<feature type="mutagenesis site" description="No change from wild-type." evidence="4 5">
    <original>F</original>
    <variation>A</variation>
    <location>
        <position position="27"/>
    </location>
</feature>
<feature type="mutagenesis site" description="No change from wild-type." evidence="4 5">
    <original>D</original>
    <variation>A</variation>
    <location>
        <position position="51"/>
    </location>
</feature>
<proteinExistence type="evidence at protein level"/>
<name>SDHE_SERS3</name>
<accession>G4V4G2</accession>
<protein>
    <recommendedName>
        <fullName evidence="7">FAD assembly factor SdhE</fullName>
    </recommendedName>
    <alternativeName>
        <fullName evidence="1">Antitoxin CptB</fullName>
    </alternativeName>
    <alternativeName>
        <fullName evidence="7">DUF339 protein</fullName>
    </alternativeName>
</protein>
<sequence length="88" mass="10487">MDIDNKPRIHWACRRGMRELDISIMPFFEHDYDTLSDDDKRNFIRLLQCDDPDLFNWLMNHGEPTDQGLKHMVSLIQTRNKNRGPVAM</sequence>
<dbReference type="EMBL" id="HE580156">
    <property type="protein sequence ID" value="CCD22035.1"/>
    <property type="molecule type" value="Genomic_DNA"/>
</dbReference>
<dbReference type="EMBL" id="CP025084">
    <property type="protein sequence ID" value="ESN63753.1"/>
    <property type="molecule type" value="Genomic_DNA"/>
</dbReference>
<dbReference type="RefSeq" id="WP_021014431.1">
    <property type="nucleotide sequence ID" value="NZ_CP025084.1"/>
</dbReference>
<dbReference type="SMR" id="G4V4G2"/>
<dbReference type="IntAct" id="G4V4G2">
    <property type="interactions" value="1"/>
</dbReference>
<dbReference type="MINT" id="G4V4G2"/>
<dbReference type="STRING" id="104623.Ser39006_01161"/>
<dbReference type="eggNOG" id="COG2938">
    <property type="taxonomic scope" value="Bacteria"/>
</dbReference>
<dbReference type="OrthoDB" id="9180899at2"/>
<dbReference type="UniPathway" id="UPA01072"/>
<dbReference type="Proteomes" id="UP000017700">
    <property type="component" value="Chromosome"/>
</dbReference>
<dbReference type="GO" id="GO:0005737">
    <property type="term" value="C:cytoplasm"/>
    <property type="evidence" value="ECO:0007669"/>
    <property type="project" value="UniProtKB-SubCell"/>
</dbReference>
<dbReference type="GO" id="GO:0017000">
    <property type="term" value="P:antibiotic biosynthetic process"/>
    <property type="evidence" value="ECO:0007669"/>
    <property type="project" value="UniProtKB-KW"/>
</dbReference>
<dbReference type="GO" id="GO:0034552">
    <property type="term" value="P:respiratory chain complex II assembly"/>
    <property type="evidence" value="ECO:0000314"/>
    <property type="project" value="UniProtKB"/>
</dbReference>
<dbReference type="GO" id="GO:0006105">
    <property type="term" value="P:succinate metabolic process"/>
    <property type="evidence" value="ECO:0007669"/>
    <property type="project" value="TreeGrafter"/>
</dbReference>
<dbReference type="FunFam" id="1.10.150.250:FF:000001">
    <property type="entry name" value="FAD assembly factor SdhE"/>
    <property type="match status" value="1"/>
</dbReference>
<dbReference type="Gene3D" id="1.10.150.250">
    <property type="entry name" value="Flavinator of succinate dehydrogenase"/>
    <property type="match status" value="1"/>
</dbReference>
<dbReference type="InterPro" id="IPR005631">
    <property type="entry name" value="SDH"/>
</dbReference>
<dbReference type="InterPro" id="IPR036714">
    <property type="entry name" value="SDH_sf"/>
</dbReference>
<dbReference type="InterPro" id="IPR050531">
    <property type="entry name" value="SdhE_FAD_assembly_factor"/>
</dbReference>
<dbReference type="NCBIfam" id="NF008130">
    <property type="entry name" value="PRK10878.1"/>
    <property type="match status" value="1"/>
</dbReference>
<dbReference type="PANTHER" id="PTHR39585">
    <property type="entry name" value="FAD ASSEMBLY FACTOR SDHE"/>
    <property type="match status" value="1"/>
</dbReference>
<dbReference type="PANTHER" id="PTHR39585:SF1">
    <property type="entry name" value="FAD ASSEMBLY FACTOR SDHE"/>
    <property type="match status" value="1"/>
</dbReference>
<dbReference type="Pfam" id="PF03937">
    <property type="entry name" value="Sdh5"/>
    <property type="match status" value="1"/>
</dbReference>
<dbReference type="SUPFAM" id="SSF109910">
    <property type="entry name" value="YgfY-like"/>
    <property type="match status" value="1"/>
</dbReference>
<reference key="1">
    <citation type="journal article" date="2012" name="J. Biol. Chem.">
        <title>SdhE is a conserved protein required for flavinylation of succinate dehydrogenase in bacteria.</title>
        <authorList>
            <person name="McNeil M.B."/>
            <person name="Clulow J.S."/>
            <person name="Wilf N.M."/>
            <person name="Salmond G.P."/>
            <person name="Fineran P.C."/>
        </authorList>
    </citation>
    <scope>NUCLEOTIDE SEQUENCE [GENOMIC DNA]</scope>
    <scope>FUNCTION</scope>
    <scope>FAD-BINDING</scope>
    <scope>PATHWAY</scope>
    <scope>SUBUNIT</scope>
    <scope>SUBCELLULAR LOCATION</scope>
    <scope>INDUCTION</scope>
    <scope>MASS SPECTROMETRY</scope>
    <scope>DISRUPTION PHENOTYPE</scope>
    <scope>MUTAGENESIS OF GLY-16</scope>
    <source>
        <strain>ATCC 39006 / SC 11482</strain>
    </source>
</reference>
<reference key="2">
    <citation type="journal article" date="2013" name="Genome Announc.">
        <title>Draft genome sequence of Serratia sp. strain ATCC 39006, a model bacterium for analysis of the biosynthesis and regulation of prodigiosin, a carbapenem, and gas vesicles.</title>
        <authorList>
            <person name="Fineran P.C."/>
            <person name="Iglesias Cans M.C."/>
            <person name="Ramsay J.P."/>
            <person name="Wilf N.M."/>
            <person name="Cossyleon D."/>
            <person name="McNeil M.B."/>
            <person name="Williamson N.R."/>
            <person name="Monson R.E."/>
            <person name="Becher S.A."/>
            <person name="Stanton J.A."/>
            <person name="Brugger K."/>
            <person name="Brown S.D."/>
            <person name="Salmond G.P."/>
        </authorList>
    </citation>
    <scope>NUCLEOTIDE SEQUENCE [LARGE SCALE GENOMIC DNA]</scope>
    <source>
        <strain>ATCC 39006 / SC 11482</strain>
    </source>
</reference>
<reference key="3">
    <citation type="journal article" date="2013" name="Microbiology">
        <title>YgfX (CptA) is a multimeric membrane protein that interacts with the succinate dehydrogenase assembly factor SdhE (YgfY).</title>
        <authorList>
            <person name="McNeil M.B."/>
            <person name="Iglesias-Cans M.C."/>
            <person name="Clulow J.S."/>
            <person name="Fineran P.C."/>
        </authorList>
    </citation>
    <scope>SUBUNIT</scope>
    <scope>DISRUPTION PHENOTYPE</scope>
    <source>
        <strain>ATCC 39006 / SC 11482</strain>
    </source>
</reference>
<reference key="4">
    <citation type="journal article" date="2013" name="Biochemistry">
        <title>The conserved RGxxE motif of the bacterial FAD assembly factor SdhE is required for succinate dehydrogenase flavinylation and activity.</title>
        <authorList>
            <person name="McNeil M.B."/>
            <person name="Fineran P.C."/>
        </authorList>
    </citation>
    <scope>FUNCTION</scope>
    <scope>SUBUNIT</scope>
    <scope>DISRUPTION PHENOTYPE</scope>
    <scope>MUTAGENESIS OF ARG-15; GLY-16; GLU-19; ASP-21; PHE-27 AND ASP-51</scope>
    <source>
        <strain>ATCC 39006 / SC 11482</strain>
    </source>
</reference>
<reference key="5">
    <citation type="journal article" date="2014" name="FEBS Lett.">
        <title>The succinate dehydrogenase assembly factor, SdhE, is required for the flavinylation and activation of fumarate reductase in bacteria.</title>
        <authorList>
            <person name="McNeil M.B."/>
            <person name="Hampton H.G."/>
            <person name="Hards K.J."/>
            <person name="Watson B.N."/>
            <person name="Cook G.M."/>
            <person name="Fineran P.C."/>
        </authorList>
    </citation>
    <scope>FUNCTION</scope>
    <scope>SUBUNIT</scope>
    <scope>INDUCTION</scope>
    <scope>DISRUPTION PHENOTYPE</scope>
    <scope>MUTAGENESIS OF ARG-15; GLY-16; GLU-19; ASP-21; PHE-27 AND ASP-51</scope>
    <source>
        <strain>ATCC 39006 / SC 11482</strain>
    </source>
</reference>
<reference key="6">
    <citation type="journal article" date="2015" name="Appl. Microbiol. Biotechnol.">
        <title>SdhE-dependent formation of a functional Acetobacter pasteurianus succinate dehydrogenase in Gluconobacter oxydans--a first step toward a complete tricarboxylic acid cycle.</title>
        <authorList>
            <person name="Kiefler I."/>
            <person name="Bringer S."/>
            <person name="Bott M."/>
        </authorList>
    </citation>
    <scope>FUNCTION</scope>
    <source>
        <strain>ATCC 39006 / SC 11482</strain>
    </source>
</reference>
<evidence type="ECO:0000250" key="1">
    <source>
        <dbReference type="UniProtKB" id="P64559"/>
    </source>
</evidence>
<evidence type="ECO:0000269" key="2">
    <source>
    </source>
</evidence>
<evidence type="ECO:0000269" key="3">
    <source>
    </source>
</evidence>
<evidence type="ECO:0000269" key="4">
    <source>
    </source>
</evidence>
<evidence type="ECO:0000269" key="5">
    <source>
    </source>
</evidence>
<evidence type="ECO:0000269" key="6">
    <source>
    </source>
</evidence>
<evidence type="ECO:0000303" key="7">
    <source>
    </source>
</evidence>
<evidence type="ECO:0000305" key="8"/>
<comment type="function">
    <text evidence="2 4 5 6">An FAD assembly protein, which accelerates covalent attachment of the cofactor into other proteins (PubMed:24070374, PubMed:24374335). Plays an essential role in the assembly of succinate dehydrogenase (SDH, respiratory complex II), an enzyme complex that is a component of both the tricarboxylic acid cycle and the electron transport chain, and which couples the oxidation of succinate to fumarate with the reduction of ubiquinone (coenzyme Q) to ubiquinol. Required for flavinylation (covalent attachment of FAD) of the flavoprotein subunit SdhA of SDH (PubMed:22474332). Required for flavinylation of the flavoprotein subunit FrdA of fumarate reductase (FRD) (PubMed:24374335). Flavinylation of SDH and FRD occurs in a similar but not identical manner, as site-specific mutations display subtle differences between them (PubMed:24070374, PubMed:24374335). Flavinylates SdhA in vivo in the absence of the other SDH subunits; SdhE mutants that do not flavinylate also interfere with wild-type activity in a possible dominant-negative fashion (PubMed:24070374). Weakly binds to FAD and facilitates its binding to SdhA (PubMed:22474332). Required for production of prodigiosin antibiotic (Pig); overproduction of SdhE in a deletion mutant leads to decreased synthesis of Pig compared to wild-type (PubMed:22474332). Capable of flavinylating A.pasteurianus SdhA when the SDH operon and this gene are expressed in G.oxydans; flavinylation of SdhA is detected only in the presence of sdhE (PubMed:26399411).</text>
</comment>
<comment type="pathway">
    <text evidence="2">Antibiotic biosynthesis; prodigiosin biosynthesis.</text>
</comment>
<comment type="subunit">
    <text evidence="1 2 3 4 5">Monomer (By similarity). Makes weak or transient interactions with SdhA (PubMed:22474332, PubMed:24070374). Interacts with YgfX (PubMed:23657679). Interacts with FrdA (PubMed:24374335).</text>
</comment>
<comment type="subcellular location">
    <subcellularLocation>
        <location evidence="2">Cytoplasm</location>
    </subcellularLocation>
</comment>
<comment type="induction">
    <text evidence="2 5">Transcribed under both aerobic (with succinate or glucose) and anaerobic (with glycerol with or without fumarate) conditions (PubMed:24374335). Part of the sdhE-ygfX operon (PubMed:22474332).</text>
</comment>
<comment type="mass spectrometry" mass="11884.7" method="MALDI" evidence="2">
    <text>Includes the mass of an N-terminal His tag.</text>
</comment>
<comment type="mass spectrometry" mass="12679.4" method="MALDI" evidence="2">
    <text>Includes the mass of an N-terminal His tag plus FAD.</text>
</comment>
<comment type="disruption phenotype">
    <text evidence="2 3 4 5">Pleiotropic effects (PubMed:22474332). Under aerobic conditions no growth on succinate, 90% reduction of succinate dehydrogenase (SDH) activity, no incorporation of FAD into SDH, however the SHD enzyme complex forms stably, more SdhA is incorporated into the membrane (PubMed:22474332, PubMed:24070374). Decreased aerobic growth rate in rich medium (LB) (PubMed:22474332, PubMed:23657679). Partial growth defect during anaerobic growth on glycerol fumarate medium; greatly decreased incorporation of FAD into FRD (PubMed:24374335). During aerobic growth 50% decreased synthesis of prodigiosin antibiotic, decreased transcription of flavoprotein desaturase PigA (PubMed:22474332). During aerobic growth decreased production of cellulase and pectin lyase, reduced swimming motility, reduced virulence in potato infection assays, reduced N-acyl homoserine lacton production, abolition of beta-lactam antibiotic synthesis (PubMed:22474332).</text>
</comment>
<comment type="similarity">
    <text evidence="8">Belongs to the SdhE FAD assembly factor family.</text>
</comment>
<gene>
    <name evidence="7" type="primary">sdhE</name>
    <name type="synonym">cptB</name>
    <name type="synonym">ygfY</name>
    <name type="ORF">Ser39006_01161</name>
</gene>